<protein>
    <recommendedName>
        <fullName evidence="1">Small ribosomal subunit protein uS8</fullName>
    </recommendedName>
    <alternativeName>
        <fullName evidence="2">30S ribosomal protein S8</fullName>
    </alternativeName>
</protein>
<reference key="1">
    <citation type="journal article" date="2007" name="PLoS Biol.">
        <title>Evolution of symbiotic bacteria in the distal human intestine.</title>
        <authorList>
            <person name="Xu J."/>
            <person name="Mahowald M.A."/>
            <person name="Ley R.E."/>
            <person name="Lozupone C.A."/>
            <person name="Hamady M."/>
            <person name="Martens E.C."/>
            <person name="Henrissat B."/>
            <person name="Coutinho P.M."/>
            <person name="Minx P."/>
            <person name="Latreille P."/>
            <person name="Cordum H."/>
            <person name="Van Brunt A."/>
            <person name="Kim K."/>
            <person name="Fulton R.S."/>
            <person name="Fulton L.A."/>
            <person name="Clifton S.W."/>
            <person name="Wilson R.K."/>
            <person name="Knight R.D."/>
            <person name="Gordon J.I."/>
        </authorList>
    </citation>
    <scope>NUCLEOTIDE SEQUENCE [LARGE SCALE GENOMIC DNA]</scope>
    <source>
        <strain>ATCC 8482 / DSM 1447 / JCM 5826 / CCUG 4940 / NBRC 14291 / NCTC 11154</strain>
    </source>
</reference>
<gene>
    <name evidence="1" type="primary">rpsH</name>
    <name type="ordered locus">BVU_0791</name>
</gene>
<feature type="chain" id="PRO_0000305735" description="Small ribosomal subunit protein uS8">
    <location>
        <begin position="1"/>
        <end position="131"/>
    </location>
</feature>
<accession>A6KYI1</accession>
<proteinExistence type="inferred from homology"/>
<dbReference type="EMBL" id="CP000139">
    <property type="protein sequence ID" value="ABR38495.1"/>
    <property type="molecule type" value="Genomic_DNA"/>
</dbReference>
<dbReference type="RefSeq" id="WP_005844874.1">
    <property type="nucleotide sequence ID" value="NZ_JANSWM010000035.1"/>
</dbReference>
<dbReference type="SMR" id="A6KYI1"/>
<dbReference type="STRING" id="435590.BVU_0791"/>
<dbReference type="PaxDb" id="435590-BVU_0791"/>
<dbReference type="GeneID" id="93449009"/>
<dbReference type="KEGG" id="bvu:BVU_0791"/>
<dbReference type="eggNOG" id="COG0096">
    <property type="taxonomic scope" value="Bacteria"/>
</dbReference>
<dbReference type="HOGENOM" id="CLU_098428_0_2_10"/>
<dbReference type="BioCyc" id="BVUL435590:G1G59-833-MONOMER"/>
<dbReference type="Proteomes" id="UP000002861">
    <property type="component" value="Chromosome"/>
</dbReference>
<dbReference type="GO" id="GO:1990904">
    <property type="term" value="C:ribonucleoprotein complex"/>
    <property type="evidence" value="ECO:0007669"/>
    <property type="project" value="UniProtKB-KW"/>
</dbReference>
<dbReference type="GO" id="GO:0005840">
    <property type="term" value="C:ribosome"/>
    <property type="evidence" value="ECO:0007669"/>
    <property type="project" value="UniProtKB-KW"/>
</dbReference>
<dbReference type="GO" id="GO:0019843">
    <property type="term" value="F:rRNA binding"/>
    <property type="evidence" value="ECO:0007669"/>
    <property type="project" value="UniProtKB-UniRule"/>
</dbReference>
<dbReference type="GO" id="GO:0003735">
    <property type="term" value="F:structural constituent of ribosome"/>
    <property type="evidence" value="ECO:0007669"/>
    <property type="project" value="InterPro"/>
</dbReference>
<dbReference type="GO" id="GO:0006412">
    <property type="term" value="P:translation"/>
    <property type="evidence" value="ECO:0007669"/>
    <property type="project" value="UniProtKB-UniRule"/>
</dbReference>
<dbReference type="FunFam" id="3.30.1370.30:FF:000005">
    <property type="entry name" value="30S ribosomal protein S8"/>
    <property type="match status" value="1"/>
</dbReference>
<dbReference type="FunFam" id="3.30.1490.10:FF:000001">
    <property type="entry name" value="30S ribosomal protein S8"/>
    <property type="match status" value="1"/>
</dbReference>
<dbReference type="Gene3D" id="3.30.1370.30">
    <property type="match status" value="1"/>
</dbReference>
<dbReference type="Gene3D" id="3.30.1490.10">
    <property type="match status" value="1"/>
</dbReference>
<dbReference type="HAMAP" id="MF_01302_B">
    <property type="entry name" value="Ribosomal_uS8_B"/>
    <property type="match status" value="1"/>
</dbReference>
<dbReference type="InterPro" id="IPR000630">
    <property type="entry name" value="Ribosomal_uS8"/>
</dbReference>
<dbReference type="InterPro" id="IPR047863">
    <property type="entry name" value="Ribosomal_uS8_CS"/>
</dbReference>
<dbReference type="InterPro" id="IPR035987">
    <property type="entry name" value="Ribosomal_uS8_sf"/>
</dbReference>
<dbReference type="NCBIfam" id="NF001109">
    <property type="entry name" value="PRK00136.1"/>
    <property type="match status" value="1"/>
</dbReference>
<dbReference type="PANTHER" id="PTHR11758">
    <property type="entry name" value="40S RIBOSOMAL PROTEIN S15A"/>
    <property type="match status" value="1"/>
</dbReference>
<dbReference type="Pfam" id="PF00410">
    <property type="entry name" value="Ribosomal_S8"/>
    <property type="match status" value="1"/>
</dbReference>
<dbReference type="SUPFAM" id="SSF56047">
    <property type="entry name" value="Ribosomal protein S8"/>
    <property type="match status" value="1"/>
</dbReference>
<dbReference type="PROSITE" id="PS00053">
    <property type="entry name" value="RIBOSOMAL_S8"/>
    <property type="match status" value="1"/>
</dbReference>
<organism>
    <name type="scientific">Phocaeicola vulgatus (strain ATCC 8482 / DSM 1447 / JCM 5826 / CCUG 4940 / NBRC 14291 / NCTC 11154)</name>
    <name type="common">Bacteroides vulgatus</name>
    <dbReference type="NCBI Taxonomy" id="435590"/>
    <lineage>
        <taxon>Bacteria</taxon>
        <taxon>Pseudomonadati</taxon>
        <taxon>Bacteroidota</taxon>
        <taxon>Bacteroidia</taxon>
        <taxon>Bacteroidales</taxon>
        <taxon>Bacteroidaceae</taxon>
        <taxon>Phocaeicola</taxon>
    </lineage>
</organism>
<sequence length="131" mass="14564">MTDPIADYLTRLRNAISAKHRVVEVPASNLKKEITKILFDKGYILNYKFVEDGPQGTIKVALKYDSVNKVNAIKKLIRVSTPGLRKYTGYKDMPRVINGLGIAIISTSKGVMTNKEAAELKIGGEVLCYVY</sequence>
<comment type="function">
    <text evidence="1">One of the primary rRNA binding proteins, it binds directly to 16S rRNA central domain where it helps coordinate assembly of the platform of the 30S subunit.</text>
</comment>
<comment type="subunit">
    <text evidence="1">Part of the 30S ribosomal subunit. Contacts proteins S5 and S12.</text>
</comment>
<comment type="similarity">
    <text evidence="1">Belongs to the universal ribosomal protein uS8 family.</text>
</comment>
<keyword id="KW-0687">Ribonucleoprotein</keyword>
<keyword id="KW-0689">Ribosomal protein</keyword>
<keyword id="KW-0694">RNA-binding</keyword>
<keyword id="KW-0699">rRNA-binding</keyword>
<name>RS8_PHOV8</name>
<evidence type="ECO:0000255" key="1">
    <source>
        <dbReference type="HAMAP-Rule" id="MF_01302"/>
    </source>
</evidence>
<evidence type="ECO:0000305" key="2"/>